<proteinExistence type="inferred from homology"/>
<organism>
    <name type="scientific">Xanthomonas campestris pv. phaseoli</name>
    <dbReference type="NCBI Taxonomy" id="317013"/>
    <lineage>
        <taxon>Bacteria</taxon>
        <taxon>Pseudomonadati</taxon>
        <taxon>Pseudomonadota</taxon>
        <taxon>Gammaproteobacteria</taxon>
        <taxon>Lysobacterales</taxon>
        <taxon>Lysobacteraceae</taxon>
        <taxon>Xanthomonas</taxon>
    </lineage>
</organism>
<keyword id="KW-1015">Disulfide bond</keyword>
<keyword id="KW-0274">FAD</keyword>
<keyword id="KW-0285">Flavoprotein</keyword>
<keyword id="KW-0520">NAD</keyword>
<keyword id="KW-0521">NADP</keyword>
<keyword id="KW-0560">Oxidoreductase</keyword>
<keyword id="KW-0676">Redox-active center</keyword>
<feature type="chain" id="PRO_0000166787" description="Alkyl hydroperoxide reductase subunit F">
    <location>
        <begin position="1"/>
        <end position="530"/>
    </location>
</feature>
<feature type="binding site" evidence="1">
    <location>
        <begin position="214"/>
        <end position="229"/>
    </location>
    <ligand>
        <name>FAD</name>
        <dbReference type="ChEBI" id="CHEBI:57692"/>
    </ligand>
</feature>
<feature type="binding site" evidence="1">
    <location>
        <begin position="356"/>
        <end position="370"/>
    </location>
    <ligand>
        <name>NAD(+)</name>
        <dbReference type="ChEBI" id="CHEBI:57540"/>
    </ligand>
</feature>
<feature type="binding site" evidence="1">
    <location>
        <begin position="477"/>
        <end position="487"/>
    </location>
    <ligand>
        <name>FAD</name>
        <dbReference type="ChEBI" id="CHEBI:57692"/>
    </ligand>
</feature>
<feature type="disulfide bond" description="Redox-active" evidence="1">
    <location>
        <begin position="344"/>
        <end position="347"/>
    </location>
</feature>
<accession>O06465</accession>
<comment type="function">
    <text>Serves to protect the cell against DNA damage by alkyl hydroperoxides. It can use either NADH or NADPH as electron donor for direct reduction of redox dyes or of alkyl hydroperoxides when combined with the AhpC protein.</text>
</comment>
<comment type="cofactor">
    <cofactor evidence="1">
        <name>FAD</name>
        <dbReference type="ChEBI" id="CHEBI:57692"/>
    </cofactor>
    <text evidence="1">Binds 1 FAD per subunit.</text>
</comment>
<comment type="subunit">
    <text evidence="1">Homodimer.</text>
</comment>
<comment type="miscellaneous">
    <text>The active site is a redox-active disulfide bond.</text>
</comment>
<comment type="similarity">
    <text evidence="2">Belongs to the class-II pyridine nucleotide-disulfide oxidoreductase family.</text>
</comment>
<reference key="1">
    <citation type="journal article" date="1997" name="J. Bacteriol.">
        <title>Isolation and analysis of the Xanthomonas alkyl hydroperoxide reductase gene and the peroxide sensor regulator genes ahpC and ahpF-oxyR-orfX.</title>
        <authorList>
            <person name="Loprasert S."/>
            <person name="Atichartpongkul S."/>
            <person name="Whangsuk W."/>
            <person name="Mongkolsuk S."/>
        </authorList>
    </citation>
    <scope>NUCLEOTIDE SEQUENCE [GENOMIC DNA]</scope>
</reference>
<name>AHPF_XANCH</name>
<sequence length="530" mass="56922">MLDANLKTQLTAYLERVTRPIQINASIDDSAGSREMLDLLEELVLLSDKISLDIHRDDNQRKPSFALTTPGQDISLRFAGLPMGHEFTSLVLALLQVGGHPSKAAAELIEQVQHLEGDYQFETYFSLSCQNCPDVVQALNLAAVLNPRIKHVAIDGAWFQDEVQARQIMSVPTVYLNGELFDQGRMTLEQIVAKLDTNAAKRDAAKIAAKEAFDVLVVGGGPAGSAAAVYAARKGIRTGVAAERFGGQVLDTMSIENFISVPETEGPKMAAALEQHVRQYDVDIMNLQRAEQLIPAGADGLIEIKLANGASLKSKTVILSTGARWRQMNVPGEDQYKNKGVAYCPHCDGPLFKGKRVAVIGGGNSGVEAAIDLAGIVAHVTLVEFDDKLRADEVLQRKLRSLHNVRIITSAQTTEVLGDGQKVTGLVYKDRTGGDIQHIELEGVFVQIGLLPNTEFLRGTVALSPRGEIIVDDRGQTDVPGVFAAGDATTVPYKQIVIAMGEGSKAALSAFDHLIRTSAPATADSVAQAA</sequence>
<evidence type="ECO:0000250" key="1"/>
<evidence type="ECO:0000305" key="2"/>
<protein>
    <recommendedName>
        <fullName>Alkyl hydroperoxide reductase subunit F</fullName>
        <ecNumber>1.8.1.-</ecNumber>
    </recommendedName>
</protein>
<gene>
    <name type="primary">ahpF</name>
</gene>
<dbReference type="EC" id="1.8.1.-"/>
<dbReference type="EMBL" id="U94336">
    <property type="protein sequence ID" value="AAC45426.1"/>
    <property type="molecule type" value="Genomic_DNA"/>
</dbReference>
<dbReference type="RefSeq" id="WP_039567731.1">
    <property type="nucleotide sequence ID" value="NZ_OCZD01000086.1"/>
</dbReference>
<dbReference type="SMR" id="O06465"/>
<dbReference type="eggNOG" id="COG3634">
    <property type="taxonomic scope" value="Bacteria"/>
</dbReference>
<dbReference type="GO" id="GO:0050660">
    <property type="term" value="F:flavin adenine dinucleotide binding"/>
    <property type="evidence" value="ECO:0007669"/>
    <property type="project" value="InterPro"/>
</dbReference>
<dbReference type="GO" id="GO:0051287">
    <property type="term" value="F:NAD binding"/>
    <property type="evidence" value="ECO:0007669"/>
    <property type="project" value="InterPro"/>
</dbReference>
<dbReference type="GO" id="GO:0102039">
    <property type="term" value="F:NADH-dependent peroxiredoxin activity"/>
    <property type="evidence" value="ECO:0007669"/>
    <property type="project" value="InterPro"/>
</dbReference>
<dbReference type="GO" id="GO:0016668">
    <property type="term" value="F:oxidoreductase activity, acting on a sulfur group of donors, NAD(P) as acceptor"/>
    <property type="evidence" value="ECO:0007669"/>
    <property type="project" value="UniProtKB-ARBA"/>
</dbReference>
<dbReference type="GO" id="GO:0000302">
    <property type="term" value="P:response to reactive oxygen species"/>
    <property type="evidence" value="ECO:0007669"/>
    <property type="project" value="InterPro"/>
</dbReference>
<dbReference type="CDD" id="cd03026">
    <property type="entry name" value="AhpF_NTD_C"/>
    <property type="match status" value="1"/>
</dbReference>
<dbReference type="CDD" id="cd02974">
    <property type="entry name" value="AhpF_NTD_N"/>
    <property type="match status" value="1"/>
</dbReference>
<dbReference type="FunFam" id="3.50.50.60:FF:000007">
    <property type="entry name" value="Alkyl hydroperoxide reductase, F subunit"/>
    <property type="match status" value="1"/>
</dbReference>
<dbReference type="Gene3D" id="3.40.30.80">
    <property type="match status" value="1"/>
</dbReference>
<dbReference type="Gene3D" id="3.50.50.60">
    <property type="entry name" value="FAD/NAD(P)-binding domain"/>
    <property type="match status" value="2"/>
</dbReference>
<dbReference type="InterPro" id="IPR044141">
    <property type="entry name" value="AhpF_NTD_C"/>
</dbReference>
<dbReference type="InterPro" id="IPR044142">
    <property type="entry name" value="AhpF_NTD_N"/>
</dbReference>
<dbReference type="InterPro" id="IPR012081">
    <property type="entry name" value="Alkyl_hydroperoxide_Rdtase_suF"/>
</dbReference>
<dbReference type="InterPro" id="IPR036188">
    <property type="entry name" value="FAD/NAD-bd_sf"/>
</dbReference>
<dbReference type="InterPro" id="IPR023753">
    <property type="entry name" value="FAD/NAD-binding_dom"/>
</dbReference>
<dbReference type="InterPro" id="IPR050097">
    <property type="entry name" value="Ferredoxin-NADP_redctase_2"/>
</dbReference>
<dbReference type="InterPro" id="IPR008255">
    <property type="entry name" value="Pyr_nucl-diS_OxRdtase_2_AS"/>
</dbReference>
<dbReference type="InterPro" id="IPR012336">
    <property type="entry name" value="Thioredoxin-like_fold"/>
</dbReference>
<dbReference type="InterPro" id="IPR036249">
    <property type="entry name" value="Thioredoxin-like_sf"/>
</dbReference>
<dbReference type="NCBIfam" id="TIGR03140">
    <property type="entry name" value="AhpF"/>
    <property type="match status" value="1"/>
</dbReference>
<dbReference type="PANTHER" id="PTHR48105">
    <property type="entry name" value="THIOREDOXIN REDUCTASE 1-RELATED-RELATED"/>
    <property type="match status" value="1"/>
</dbReference>
<dbReference type="Pfam" id="PF07992">
    <property type="entry name" value="Pyr_redox_2"/>
    <property type="match status" value="1"/>
</dbReference>
<dbReference type="Pfam" id="PF13192">
    <property type="entry name" value="Thioredoxin_3"/>
    <property type="match status" value="1"/>
</dbReference>
<dbReference type="PIRSF" id="PIRSF000238">
    <property type="entry name" value="AhpF"/>
    <property type="match status" value="1"/>
</dbReference>
<dbReference type="PRINTS" id="PR00368">
    <property type="entry name" value="FADPNR"/>
</dbReference>
<dbReference type="PRINTS" id="PR00469">
    <property type="entry name" value="PNDRDTASEII"/>
</dbReference>
<dbReference type="SUPFAM" id="SSF51905">
    <property type="entry name" value="FAD/NAD(P)-binding domain"/>
    <property type="match status" value="1"/>
</dbReference>
<dbReference type="SUPFAM" id="SSF52833">
    <property type="entry name" value="Thioredoxin-like"/>
    <property type="match status" value="2"/>
</dbReference>
<dbReference type="PROSITE" id="PS51354">
    <property type="entry name" value="GLUTAREDOXIN_2"/>
    <property type="match status" value="1"/>
</dbReference>
<dbReference type="PROSITE" id="PS00573">
    <property type="entry name" value="PYRIDINE_REDOX_2"/>
    <property type="match status" value="1"/>
</dbReference>